<dbReference type="EC" id="6.5.1.1" evidence="1"/>
<dbReference type="EMBL" id="U52681">
    <property type="protein sequence ID" value="AAC44823.1"/>
    <property type="molecule type" value="Genomic_DNA"/>
</dbReference>
<dbReference type="SMR" id="P54875"/>
<dbReference type="GO" id="GO:0005524">
    <property type="term" value="F:ATP binding"/>
    <property type="evidence" value="ECO:0007669"/>
    <property type="project" value="UniProtKB-UniRule"/>
</dbReference>
<dbReference type="GO" id="GO:0003677">
    <property type="term" value="F:DNA binding"/>
    <property type="evidence" value="ECO:0007669"/>
    <property type="project" value="InterPro"/>
</dbReference>
<dbReference type="GO" id="GO:0003910">
    <property type="term" value="F:DNA ligase (ATP) activity"/>
    <property type="evidence" value="ECO:0007669"/>
    <property type="project" value="UniProtKB-UniRule"/>
</dbReference>
<dbReference type="GO" id="GO:0046872">
    <property type="term" value="F:metal ion binding"/>
    <property type="evidence" value="ECO:0007669"/>
    <property type="project" value="UniProtKB-KW"/>
</dbReference>
<dbReference type="GO" id="GO:0051301">
    <property type="term" value="P:cell division"/>
    <property type="evidence" value="ECO:0007669"/>
    <property type="project" value="UniProtKB-KW"/>
</dbReference>
<dbReference type="GO" id="GO:0071897">
    <property type="term" value="P:DNA biosynthetic process"/>
    <property type="evidence" value="ECO:0007669"/>
    <property type="project" value="InterPro"/>
</dbReference>
<dbReference type="GO" id="GO:0006310">
    <property type="term" value="P:DNA recombination"/>
    <property type="evidence" value="ECO:0007669"/>
    <property type="project" value="UniProtKB-UniRule"/>
</dbReference>
<dbReference type="GO" id="GO:0006281">
    <property type="term" value="P:DNA repair"/>
    <property type="evidence" value="ECO:0007669"/>
    <property type="project" value="UniProtKB-UniRule"/>
</dbReference>
<dbReference type="GO" id="GO:0006273">
    <property type="term" value="P:lagging strand elongation"/>
    <property type="evidence" value="ECO:0007669"/>
    <property type="project" value="TreeGrafter"/>
</dbReference>
<dbReference type="CDD" id="cd07901">
    <property type="entry name" value="Adenylation_DNA_ligase_Arch_LigB"/>
    <property type="match status" value="1"/>
</dbReference>
<dbReference type="CDD" id="cd07972">
    <property type="entry name" value="OBF_DNA_ligase_Arch_LigB"/>
    <property type="match status" value="1"/>
</dbReference>
<dbReference type="FunFam" id="1.10.3260.10:FF:000007">
    <property type="entry name" value="DNA ligase"/>
    <property type="match status" value="1"/>
</dbReference>
<dbReference type="Gene3D" id="1.10.3260.10">
    <property type="entry name" value="DNA ligase, ATP-dependent, N-terminal domain"/>
    <property type="match status" value="1"/>
</dbReference>
<dbReference type="Gene3D" id="3.30.470.30">
    <property type="entry name" value="DNA ligase/mRNA capping enzyme"/>
    <property type="match status" value="1"/>
</dbReference>
<dbReference type="Gene3D" id="2.40.50.140">
    <property type="entry name" value="Nucleic acid-binding proteins"/>
    <property type="match status" value="1"/>
</dbReference>
<dbReference type="HAMAP" id="MF_00407">
    <property type="entry name" value="DNA_ligase"/>
    <property type="match status" value="1"/>
</dbReference>
<dbReference type="InterPro" id="IPR050191">
    <property type="entry name" value="ATP-dep_DNA_ligase"/>
</dbReference>
<dbReference type="InterPro" id="IPR022865">
    <property type="entry name" value="DNA_ligae_ATP-dep_bac/arc"/>
</dbReference>
<dbReference type="InterPro" id="IPR000977">
    <property type="entry name" value="DNA_ligase_ATP-dep"/>
</dbReference>
<dbReference type="InterPro" id="IPR012309">
    <property type="entry name" value="DNA_ligase_ATP-dep_C"/>
</dbReference>
<dbReference type="InterPro" id="IPR012310">
    <property type="entry name" value="DNA_ligase_ATP-dep_cent"/>
</dbReference>
<dbReference type="InterPro" id="IPR016059">
    <property type="entry name" value="DNA_ligase_ATP-dep_CS"/>
</dbReference>
<dbReference type="InterPro" id="IPR012308">
    <property type="entry name" value="DNA_ligase_ATP-dep_N"/>
</dbReference>
<dbReference type="InterPro" id="IPR036599">
    <property type="entry name" value="DNA_ligase_N_sf"/>
</dbReference>
<dbReference type="InterPro" id="IPR012340">
    <property type="entry name" value="NA-bd_OB-fold"/>
</dbReference>
<dbReference type="NCBIfam" id="TIGR00574">
    <property type="entry name" value="dnl1"/>
    <property type="match status" value="1"/>
</dbReference>
<dbReference type="PANTHER" id="PTHR45674:SF7">
    <property type="entry name" value="DNA LIGASE"/>
    <property type="match status" value="1"/>
</dbReference>
<dbReference type="PANTHER" id="PTHR45674">
    <property type="entry name" value="DNA LIGASE 1/3 FAMILY MEMBER"/>
    <property type="match status" value="1"/>
</dbReference>
<dbReference type="Pfam" id="PF04679">
    <property type="entry name" value="DNA_ligase_A_C"/>
    <property type="match status" value="1"/>
</dbReference>
<dbReference type="Pfam" id="PF01068">
    <property type="entry name" value="DNA_ligase_A_M"/>
    <property type="match status" value="1"/>
</dbReference>
<dbReference type="Pfam" id="PF04675">
    <property type="entry name" value="DNA_ligase_A_N"/>
    <property type="match status" value="1"/>
</dbReference>
<dbReference type="SUPFAM" id="SSF117018">
    <property type="entry name" value="ATP-dependent DNA ligase DNA-binding domain"/>
    <property type="match status" value="1"/>
</dbReference>
<dbReference type="SUPFAM" id="SSF56091">
    <property type="entry name" value="DNA ligase/mRNA capping enzyme, catalytic domain"/>
    <property type="match status" value="1"/>
</dbReference>
<dbReference type="SUPFAM" id="SSF50249">
    <property type="entry name" value="Nucleic acid-binding proteins"/>
    <property type="match status" value="1"/>
</dbReference>
<dbReference type="PROSITE" id="PS00697">
    <property type="entry name" value="DNA_LIGASE_A1"/>
    <property type="match status" value="1"/>
</dbReference>
<dbReference type="PROSITE" id="PS00333">
    <property type="entry name" value="DNA_LIGASE_A2"/>
    <property type="match status" value="1"/>
</dbReference>
<dbReference type="PROSITE" id="PS50160">
    <property type="entry name" value="DNA_LIGASE_A3"/>
    <property type="match status" value="1"/>
</dbReference>
<name>DNLI_METTF</name>
<accession>P54875</accession>
<gene>
    <name evidence="1" type="primary">lig</name>
</gene>
<reference key="1">
    <citation type="journal article" date="1997" name="J. Bacteriol.">
        <title>Growth- and substrate-dependent transcription of the formate dehydrogenase (fdhCAB) operon in Methanobacterium thermoformicicum Z-245.</title>
        <authorList>
            <person name="Noelling J."/>
            <person name="Reeve J.N."/>
        </authorList>
    </citation>
    <scope>NUCLEOTIDE SEQUENCE [GENOMIC DNA]</scope>
    <source>
        <strain>DSM 3720 / Z-245</strain>
    </source>
</reference>
<keyword id="KW-0067">ATP-binding</keyword>
<keyword id="KW-0131">Cell cycle</keyword>
<keyword id="KW-0132">Cell division</keyword>
<keyword id="KW-0227">DNA damage</keyword>
<keyword id="KW-0233">DNA recombination</keyword>
<keyword id="KW-0234">DNA repair</keyword>
<keyword id="KW-0235">DNA replication</keyword>
<keyword id="KW-0436">Ligase</keyword>
<keyword id="KW-0460">Magnesium</keyword>
<keyword id="KW-0479">Metal-binding</keyword>
<keyword id="KW-0547">Nucleotide-binding</keyword>
<sequence length="557" mass="62822">MKELLYMELAEVYHRLESTTKRLEKTEILAELLRSVDKELLPDVTILMLGRVFPIWSEEELGVGIKLLMKAISLVVGVSMDEIEDEIREQGDIGLASEKLFSRKTQTTFFSQPLTVEFVYSRLKALASASGDRAQSKKINILVEVLSQAKPLEARYITRTVLEELRVGVAEGIIRDAIARAFEVDPALVERAHMLTNDLGMVAAVAREEGEPGLGRLNLEPGRPVKPMLAQLASSIESAITELGRAFCETKYDGIRVQIHRCGDEVSIFTRRLENITAAVPEILEGVEEALPADDYIVEGEIIVTMDGRPASFQYILQRVRRKYDVDRLTREVPLSLFLFDVLYHRGPLIDEPLWHRREVLESILSEIPGRVEASRMVDVGPDNLDDALWLFKESIREGHEGIMIKDTEAPYIPGIRGKKMLKFKAEPETLDLIVVGGTYGRGKRAHLVGSYLLAVRDEKSGELKTIAHVATGLDDQTLQDLSERMENLKVERRGRKIRVKPEIILEVAYSEIVRSPEYESGYSLRFPVVKRIRDDLSPDDIDTLGRVISLFKQGFS</sequence>
<protein>
    <recommendedName>
        <fullName evidence="1">DNA ligase</fullName>
        <ecNumber evidence="1">6.5.1.1</ecNumber>
    </recommendedName>
    <alternativeName>
        <fullName evidence="1">Polydeoxyribonucleotide synthase [ATP]</fullName>
    </alternativeName>
</protein>
<comment type="function">
    <text evidence="1">DNA ligase that seals nicks in double-stranded DNA during DNA replication, DNA recombination and DNA repair.</text>
</comment>
<comment type="catalytic activity">
    <reaction evidence="1">
        <text>ATP + (deoxyribonucleotide)n-3'-hydroxyl + 5'-phospho-(deoxyribonucleotide)m = (deoxyribonucleotide)n+m + AMP + diphosphate.</text>
        <dbReference type="EC" id="6.5.1.1"/>
    </reaction>
</comment>
<comment type="cofactor">
    <cofactor evidence="1">
        <name>Mg(2+)</name>
        <dbReference type="ChEBI" id="CHEBI:18420"/>
    </cofactor>
</comment>
<comment type="similarity">
    <text evidence="1">Belongs to the ATP-dependent DNA ligase family.</text>
</comment>
<organism>
    <name type="scientific">Methanothermobacter thermautotrophicus</name>
    <name type="common">Methanobacterium thermoformicicum</name>
    <dbReference type="NCBI Taxonomy" id="145262"/>
    <lineage>
        <taxon>Archaea</taxon>
        <taxon>Methanobacteriati</taxon>
        <taxon>Methanobacteriota</taxon>
        <taxon>Methanomada group</taxon>
        <taxon>Methanobacteria</taxon>
        <taxon>Methanobacteriales</taxon>
        <taxon>Methanobacteriaceae</taxon>
        <taxon>Methanothermobacter</taxon>
    </lineage>
</organism>
<feature type="chain" id="PRO_0000059608" description="DNA ligase">
    <location>
        <begin position="1"/>
        <end position="557"/>
    </location>
</feature>
<feature type="active site" description="N6-AMP-lysine intermediate" evidence="1">
    <location>
        <position position="251"/>
    </location>
</feature>
<feature type="binding site" evidence="1">
    <location>
        <position position="249"/>
    </location>
    <ligand>
        <name>ATP</name>
        <dbReference type="ChEBI" id="CHEBI:30616"/>
    </ligand>
</feature>
<feature type="binding site" evidence="1">
    <location>
        <position position="256"/>
    </location>
    <ligand>
        <name>ATP</name>
        <dbReference type="ChEBI" id="CHEBI:30616"/>
    </ligand>
</feature>
<feature type="binding site" evidence="1">
    <location>
        <position position="271"/>
    </location>
    <ligand>
        <name>ATP</name>
        <dbReference type="ChEBI" id="CHEBI:30616"/>
    </ligand>
</feature>
<feature type="binding site" evidence="1">
    <location>
        <position position="301"/>
    </location>
    <ligand>
        <name>ATP</name>
        <dbReference type="ChEBI" id="CHEBI:30616"/>
    </ligand>
</feature>
<feature type="binding site" evidence="1">
    <location>
        <position position="340"/>
    </location>
    <ligand>
        <name>ATP</name>
        <dbReference type="ChEBI" id="CHEBI:30616"/>
    </ligand>
</feature>
<feature type="binding site" evidence="1">
    <location>
        <position position="417"/>
    </location>
    <ligand>
        <name>ATP</name>
        <dbReference type="ChEBI" id="CHEBI:30616"/>
    </ligand>
</feature>
<feature type="binding site" evidence="1">
    <location>
        <position position="423"/>
    </location>
    <ligand>
        <name>ATP</name>
        <dbReference type="ChEBI" id="CHEBI:30616"/>
    </ligand>
</feature>
<proteinExistence type="inferred from homology"/>
<evidence type="ECO:0000255" key="1">
    <source>
        <dbReference type="HAMAP-Rule" id="MF_00407"/>
    </source>
</evidence>